<keyword id="KW-0131">Cell cycle</keyword>
<keyword id="KW-0963">Cytoplasm</keyword>
<keyword id="KW-0221">Differentiation</keyword>
<keyword id="KW-0507">mRNA processing</keyword>
<keyword id="KW-0508">mRNA splicing</keyword>
<keyword id="KW-0539">Nucleus</keyword>
<keyword id="KW-1185">Reference proteome</keyword>
<keyword id="KW-0694">RNA-binding</keyword>
<reference key="1">
    <citation type="submission" date="1993-09" db="EMBL/GenBank/DDBJ databases">
        <title>A novel murine RRM-type protein and its human homolog.</title>
        <authorList>
            <person name="Ruehlmann A."/>
            <person name="Gupta A."/>
            <person name="Terhorst C."/>
        </authorList>
    </citation>
    <scope>NUCLEOTIDE SEQUENCE [MRNA]</scope>
</reference>
<reference key="2">
    <citation type="journal article" date="2005" name="Science">
        <title>The transcriptional landscape of the mammalian genome.</title>
        <authorList>
            <person name="Carninci P."/>
            <person name="Kasukawa T."/>
            <person name="Katayama S."/>
            <person name="Gough J."/>
            <person name="Frith M.C."/>
            <person name="Maeda N."/>
            <person name="Oyama R."/>
            <person name="Ravasi T."/>
            <person name="Lenhard B."/>
            <person name="Wells C."/>
            <person name="Kodzius R."/>
            <person name="Shimokawa K."/>
            <person name="Bajic V.B."/>
            <person name="Brenner S.E."/>
            <person name="Batalov S."/>
            <person name="Forrest A.R."/>
            <person name="Zavolan M."/>
            <person name="Davis M.J."/>
            <person name="Wilming L.G."/>
            <person name="Aidinis V."/>
            <person name="Allen J.E."/>
            <person name="Ambesi-Impiombato A."/>
            <person name="Apweiler R."/>
            <person name="Aturaliya R.N."/>
            <person name="Bailey T.L."/>
            <person name="Bansal M."/>
            <person name="Baxter L."/>
            <person name="Beisel K.W."/>
            <person name="Bersano T."/>
            <person name="Bono H."/>
            <person name="Chalk A.M."/>
            <person name="Chiu K.P."/>
            <person name="Choudhary V."/>
            <person name="Christoffels A."/>
            <person name="Clutterbuck D.R."/>
            <person name="Crowe M.L."/>
            <person name="Dalla E."/>
            <person name="Dalrymple B.P."/>
            <person name="de Bono B."/>
            <person name="Della Gatta G."/>
            <person name="di Bernardo D."/>
            <person name="Down T."/>
            <person name="Engstrom P."/>
            <person name="Fagiolini M."/>
            <person name="Faulkner G."/>
            <person name="Fletcher C.F."/>
            <person name="Fukushima T."/>
            <person name="Furuno M."/>
            <person name="Futaki S."/>
            <person name="Gariboldi M."/>
            <person name="Georgii-Hemming P."/>
            <person name="Gingeras T.R."/>
            <person name="Gojobori T."/>
            <person name="Green R.E."/>
            <person name="Gustincich S."/>
            <person name="Harbers M."/>
            <person name="Hayashi Y."/>
            <person name="Hensch T.K."/>
            <person name="Hirokawa N."/>
            <person name="Hill D."/>
            <person name="Huminiecki L."/>
            <person name="Iacono M."/>
            <person name="Ikeo K."/>
            <person name="Iwama A."/>
            <person name="Ishikawa T."/>
            <person name="Jakt M."/>
            <person name="Kanapin A."/>
            <person name="Katoh M."/>
            <person name="Kawasawa Y."/>
            <person name="Kelso J."/>
            <person name="Kitamura H."/>
            <person name="Kitano H."/>
            <person name="Kollias G."/>
            <person name="Krishnan S.P."/>
            <person name="Kruger A."/>
            <person name="Kummerfeld S.K."/>
            <person name="Kurochkin I.V."/>
            <person name="Lareau L.F."/>
            <person name="Lazarevic D."/>
            <person name="Lipovich L."/>
            <person name="Liu J."/>
            <person name="Liuni S."/>
            <person name="McWilliam S."/>
            <person name="Madan Babu M."/>
            <person name="Madera M."/>
            <person name="Marchionni L."/>
            <person name="Matsuda H."/>
            <person name="Matsuzawa S."/>
            <person name="Miki H."/>
            <person name="Mignone F."/>
            <person name="Miyake S."/>
            <person name="Morris K."/>
            <person name="Mottagui-Tabar S."/>
            <person name="Mulder N."/>
            <person name="Nakano N."/>
            <person name="Nakauchi H."/>
            <person name="Ng P."/>
            <person name="Nilsson R."/>
            <person name="Nishiguchi S."/>
            <person name="Nishikawa S."/>
            <person name="Nori F."/>
            <person name="Ohara O."/>
            <person name="Okazaki Y."/>
            <person name="Orlando V."/>
            <person name="Pang K.C."/>
            <person name="Pavan W.J."/>
            <person name="Pavesi G."/>
            <person name="Pesole G."/>
            <person name="Petrovsky N."/>
            <person name="Piazza S."/>
            <person name="Reed J."/>
            <person name="Reid J.F."/>
            <person name="Ring B.Z."/>
            <person name="Ringwald M."/>
            <person name="Rost B."/>
            <person name="Ruan Y."/>
            <person name="Salzberg S.L."/>
            <person name="Sandelin A."/>
            <person name="Schneider C."/>
            <person name="Schoenbach C."/>
            <person name="Sekiguchi K."/>
            <person name="Semple C.A."/>
            <person name="Seno S."/>
            <person name="Sessa L."/>
            <person name="Sheng Y."/>
            <person name="Shibata Y."/>
            <person name="Shimada H."/>
            <person name="Shimada K."/>
            <person name="Silva D."/>
            <person name="Sinclair B."/>
            <person name="Sperling S."/>
            <person name="Stupka E."/>
            <person name="Sugiura K."/>
            <person name="Sultana R."/>
            <person name="Takenaka Y."/>
            <person name="Taki K."/>
            <person name="Tammoja K."/>
            <person name="Tan S.L."/>
            <person name="Tang S."/>
            <person name="Taylor M.S."/>
            <person name="Tegner J."/>
            <person name="Teichmann S.A."/>
            <person name="Ueda H.R."/>
            <person name="van Nimwegen E."/>
            <person name="Verardo R."/>
            <person name="Wei C.L."/>
            <person name="Yagi K."/>
            <person name="Yamanishi H."/>
            <person name="Zabarovsky E."/>
            <person name="Zhu S."/>
            <person name="Zimmer A."/>
            <person name="Hide W."/>
            <person name="Bult C."/>
            <person name="Grimmond S.M."/>
            <person name="Teasdale R.D."/>
            <person name="Liu E.T."/>
            <person name="Brusic V."/>
            <person name="Quackenbush J."/>
            <person name="Wahlestedt C."/>
            <person name="Mattick J.S."/>
            <person name="Hume D.A."/>
            <person name="Kai C."/>
            <person name="Sasaki D."/>
            <person name="Tomaru Y."/>
            <person name="Fukuda S."/>
            <person name="Kanamori-Katayama M."/>
            <person name="Suzuki M."/>
            <person name="Aoki J."/>
            <person name="Arakawa T."/>
            <person name="Iida J."/>
            <person name="Imamura K."/>
            <person name="Itoh M."/>
            <person name="Kato T."/>
            <person name="Kawaji H."/>
            <person name="Kawagashira N."/>
            <person name="Kawashima T."/>
            <person name="Kojima M."/>
            <person name="Kondo S."/>
            <person name="Konno H."/>
            <person name="Nakano K."/>
            <person name="Ninomiya N."/>
            <person name="Nishio T."/>
            <person name="Okada M."/>
            <person name="Plessy C."/>
            <person name="Shibata K."/>
            <person name="Shiraki T."/>
            <person name="Suzuki S."/>
            <person name="Tagami M."/>
            <person name="Waki K."/>
            <person name="Watahiki A."/>
            <person name="Okamura-Oho Y."/>
            <person name="Suzuki H."/>
            <person name="Kawai J."/>
            <person name="Hayashizaki Y."/>
        </authorList>
    </citation>
    <scope>NUCLEOTIDE SEQUENCE [LARGE SCALE MRNA]</scope>
    <source>
        <strain>C57BL/6J</strain>
        <strain>NOD</strain>
        <tissue>Egg</tissue>
        <tissue>Placenta</tissue>
        <tissue>Spleen</tissue>
    </source>
</reference>
<reference key="3">
    <citation type="journal article" date="2009" name="PLoS Biol.">
        <title>Lineage-specific biology revealed by a finished genome assembly of the mouse.</title>
        <authorList>
            <person name="Church D.M."/>
            <person name="Goodstadt L."/>
            <person name="Hillier L.W."/>
            <person name="Zody M.C."/>
            <person name="Goldstein S."/>
            <person name="She X."/>
            <person name="Bult C.J."/>
            <person name="Agarwala R."/>
            <person name="Cherry J.L."/>
            <person name="DiCuccio M."/>
            <person name="Hlavina W."/>
            <person name="Kapustin Y."/>
            <person name="Meric P."/>
            <person name="Maglott D."/>
            <person name="Birtle Z."/>
            <person name="Marques A.C."/>
            <person name="Graves T."/>
            <person name="Zhou S."/>
            <person name="Teague B."/>
            <person name="Potamousis K."/>
            <person name="Churas C."/>
            <person name="Place M."/>
            <person name="Herschleb J."/>
            <person name="Runnheim R."/>
            <person name="Forrest D."/>
            <person name="Amos-Landgraf J."/>
            <person name="Schwartz D.C."/>
            <person name="Cheng Z."/>
            <person name="Lindblad-Toh K."/>
            <person name="Eichler E.E."/>
            <person name="Ponting C.P."/>
        </authorList>
    </citation>
    <scope>NUCLEOTIDE SEQUENCE [LARGE SCALE GENOMIC DNA]</scope>
    <source>
        <strain>C57BL/6J</strain>
    </source>
</reference>
<reference key="4">
    <citation type="submission" date="2008-08" db="EMBL/GenBank/DDBJ databases">
        <authorList>
            <person name="Mural R.J."/>
            <person name="Adams M.D."/>
            <person name="Myers E.W."/>
            <person name="Smith H.O."/>
            <person name="Venter J.C."/>
        </authorList>
    </citation>
    <scope>NUCLEOTIDE SEQUENCE [LARGE SCALE GENOMIC DNA]</scope>
</reference>
<reference key="5">
    <citation type="journal article" date="2004" name="Genome Res.">
        <title>The status, quality, and expansion of the NIH full-length cDNA project: the Mammalian Gene Collection (MGC).</title>
        <authorList>
            <consortium name="The MGC Project Team"/>
        </authorList>
    </citation>
    <scope>NUCLEOTIDE SEQUENCE [LARGE SCALE MRNA]</scope>
    <source>
        <strain>FVB/N</strain>
        <tissue>Colon</tissue>
        <tissue>Mammary tumor</tissue>
    </source>
</reference>
<reference key="6">
    <citation type="journal article" date="2009" name="Genes Cells">
        <title>RNA-binding proteins Rbm38 and Rbm24 regulate myogenic differentiation via p21-dependent and -independent regulatory pathways.</title>
        <authorList>
            <person name="Miyamoto S."/>
            <person name="Hidaka K."/>
            <person name="Jin D."/>
            <person name="Morisaki T."/>
        </authorList>
    </citation>
    <scope>FUNCTION</scope>
    <scope>RNA-BINDING</scope>
    <scope>TISSUE SPECIFICITY</scope>
</reference>
<reference key="7">
    <citation type="journal article" date="2010" name="Cell">
        <title>A tissue-specific atlas of mouse protein phosphorylation and expression.</title>
        <authorList>
            <person name="Huttlin E.L."/>
            <person name="Jedrychowski M.P."/>
            <person name="Elias J.E."/>
            <person name="Goswami T."/>
            <person name="Rad R."/>
            <person name="Beausoleil S.A."/>
            <person name="Villen J."/>
            <person name="Haas W."/>
            <person name="Sowa M.E."/>
            <person name="Gygi S.P."/>
        </authorList>
    </citation>
    <scope>IDENTIFICATION BY MASS SPECTROMETRY [LARGE SCALE ANALYSIS]</scope>
    <source>
        <tissue>Spleen</tissue>
    </source>
</reference>
<name>RBM38_MOUSE</name>
<gene>
    <name type="primary">Rbm38</name>
    <name type="synonym">Rnpc1</name>
    <name type="synonym">Seb4</name>
    <name type="synonym">Seb4l</name>
</gene>
<feature type="chain" id="PRO_0000081813" description="RNA-binding protein 38">
    <location>
        <begin position="1"/>
        <end position="237"/>
    </location>
</feature>
<feature type="domain" description="RRM" evidence="2">
    <location>
        <begin position="32"/>
        <end position="109"/>
    </location>
</feature>
<feature type="region of interest" description="Disordered" evidence="3">
    <location>
        <begin position="1"/>
        <end position="24"/>
    </location>
</feature>
<feature type="sequence conflict" description="In Ref. 1; CAA53065." evidence="5" ref="1">
    <original>Q</original>
    <variation>R</variation>
    <location>
        <position position="26"/>
    </location>
</feature>
<feature type="sequence conflict" description="In Ref. 1; CAA53065." evidence="5" ref="1">
    <original>A</original>
    <variation>G</variation>
    <location>
        <position position="197"/>
    </location>
</feature>
<organism>
    <name type="scientific">Mus musculus</name>
    <name type="common">Mouse</name>
    <dbReference type="NCBI Taxonomy" id="10090"/>
    <lineage>
        <taxon>Eukaryota</taxon>
        <taxon>Metazoa</taxon>
        <taxon>Chordata</taxon>
        <taxon>Craniata</taxon>
        <taxon>Vertebrata</taxon>
        <taxon>Euteleostomi</taxon>
        <taxon>Mammalia</taxon>
        <taxon>Eutheria</taxon>
        <taxon>Euarchontoglires</taxon>
        <taxon>Glires</taxon>
        <taxon>Rodentia</taxon>
        <taxon>Myomorpha</taxon>
        <taxon>Muroidea</taxon>
        <taxon>Muridae</taxon>
        <taxon>Murinae</taxon>
        <taxon>Mus</taxon>
        <taxon>Mus</taxon>
    </lineage>
</organism>
<sequence>MLLQPACSPSVFPRPSAAPSAMHGSQKDTTFTKIFVGGLPYHTTDASLRKYFEGFGDIEEAVVITDRQTGKSRGYGFVTMADRAAADRACKDPNPIIDGRKANVNLAYLGAKPRSLQTGFAVGVQQLHPTLIQRTYGLTPHYIYPPAIVQPSVVIPATPVPSLSSPYLEYTPASPAYAQYPPATYDQYPYAASPAAATSFVGYGYPAAVPQALSAAAPAGTTFVQYQAPQLQPDRMQ</sequence>
<proteinExistence type="evidence at protein level"/>
<dbReference type="EMBL" id="X75316">
    <property type="protein sequence ID" value="CAA53065.1"/>
    <property type="molecule type" value="mRNA"/>
</dbReference>
<dbReference type="EMBL" id="AK146026">
    <property type="protein sequence ID" value="BAE26841.1"/>
    <property type="molecule type" value="mRNA"/>
</dbReference>
<dbReference type="EMBL" id="AK162141">
    <property type="protein sequence ID" value="BAE36749.1"/>
    <property type="molecule type" value="mRNA"/>
</dbReference>
<dbReference type="EMBL" id="AK172625">
    <property type="protein sequence ID" value="BAE43103.1"/>
    <property type="molecule type" value="mRNA"/>
</dbReference>
<dbReference type="EMBL" id="AL928599">
    <property type="status" value="NOT_ANNOTATED_CDS"/>
    <property type="molecule type" value="Genomic_DNA"/>
</dbReference>
<dbReference type="EMBL" id="CH466551">
    <property type="protein sequence ID" value="EDL06620.1"/>
    <property type="molecule type" value="Genomic_DNA"/>
</dbReference>
<dbReference type="EMBL" id="BC085307">
    <property type="protein sequence ID" value="AAH85307.1"/>
    <property type="molecule type" value="mRNA"/>
</dbReference>
<dbReference type="CCDS" id="CCDS17139.1"/>
<dbReference type="PIR" id="S38384">
    <property type="entry name" value="S38384"/>
</dbReference>
<dbReference type="RefSeq" id="NP_062420.2">
    <property type="nucleotide sequence ID" value="NM_019547.3"/>
</dbReference>
<dbReference type="SMR" id="Q62176"/>
<dbReference type="BioGRID" id="207830">
    <property type="interactions" value="33"/>
</dbReference>
<dbReference type="FunCoup" id="Q62176">
    <property type="interactions" value="1048"/>
</dbReference>
<dbReference type="STRING" id="10090.ENSMUSP00000133816"/>
<dbReference type="iPTMnet" id="Q62176"/>
<dbReference type="PhosphoSitePlus" id="Q62176"/>
<dbReference type="PaxDb" id="10090-ENSMUSP00000133816"/>
<dbReference type="ProteomicsDB" id="255039"/>
<dbReference type="Antibodypedia" id="28985">
    <property type="antibodies" value="128 antibodies from 21 providers"/>
</dbReference>
<dbReference type="DNASU" id="56190"/>
<dbReference type="Ensembl" id="ENSMUST00000029014.16">
    <property type="protein sequence ID" value="ENSMUSP00000029014.10"/>
    <property type="gene ID" value="ENSMUSG00000027510.18"/>
</dbReference>
<dbReference type="Ensembl" id="ENSMUST00000173393.8">
    <property type="protein sequence ID" value="ENSMUSP00000133816.2"/>
    <property type="gene ID" value="ENSMUSG00000027510.18"/>
</dbReference>
<dbReference type="GeneID" id="56190"/>
<dbReference type="KEGG" id="mmu:56190"/>
<dbReference type="UCSC" id="uc008odh.1">
    <property type="organism name" value="mouse"/>
</dbReference>
<dbReference type="AGR" id="MGI:1889294"/>
<dbReference type="CTD" id="55544"/>
<dbReference type="MGI" id="MGI:1889294">
    <property type="gene designation" value="Rbm38"/>
</dbReference>
<dbReference type="VEuPathDB" id="HostDB:ENSMUSG00000027510"/>
<dbReference type="eggNOG" id="KOG0149">
    <property type="taxonomic scope" value="Eukaryota"/>
</dbReference>
<dbReference type="GeneTree" id="ENSGT00940000158489"/>
<dbReference type="HOGENOM" id="CLU_065652_0_1_1"/>
<dbReference type="InParanoid" id="Q62176"/>
<dbReference type="OMA" id="TFVQYPA"/>
<dbReference type="OrthoDB" id="4207594at2759"/>
<dbReference type="PhylomeDB" id="Q62176"/>
<dbReference type="TreeFam" id="TF314235"/>
<dbReference type="BioGRID-ORCS" id="56190">
    <property type="hits" value="3 hits in 79 CRISPR screens"/>
</dbReference>
<dbReference type="ChiTaRS" id="Rbm38">
    <property type="organism name" value="mouse"/>
</dbReference>
<dbReference type="PRO" id="PR:Q62176"/>
<dbReference type="Proteomes" id="UP000000589">
    <property type="component" value="Chromosome 2"/>
</dbReference>
<dbReference type="RNAct" id="Q62176">
    <property type="molecule type" value="protein"/>
</dbReference>
<dbReference type="Bgee" id="ENSMUSG00000027510">
    <property type="expression patterns" value="Expressed in hindlimb stylopod muscle and 177 other cell types or tissues"/>
</dbReference>
<dbReference type="ExpressionAtlas" id="Q62176">
    <property type="expression patterns" value="baseline and differential"/>
</dbReference>
<dbReference type="GO" id="GO:0005829">
    <property type="term" value="C:cytosol"/>
    <property type="evidence" value="ECO:0007669"/>
    <property type="project" value="UniProtKB-SubCell"/>
</dbReference>
<dbReference type="GO" id="GO:0005634">
    <property type="term" value="C:nucleus"/>
    <property type="evidence" value="ECO:0007669"/>
    <property type="project" value="UniProtKB-SubCell"/>
</dbReference>
<dbReference type="GO" id="GO:0003729">
    <property type="term" value="F:mRNA binding"/>
    <property type="evidence" value="ECO:0000315"/>
    <property type="project" value="UniProtKB"/>
</dbReference>
<dbReference type="GO" id="GO:0030154">
    <property type="term" value="P:cell differentiation"/>
    <property type="evidence" value="ECO:0007669"/>
    <property type="project" value="UniProtKB-KW"/>
</dbReference>
<dbReference type="GO" id="GO:0006397">
    <property type="term" value="P:mRNA processing"/>
    <property type="evidence" value="ECO:0007669"/>
    <property type="project" value="UniProtKB-KW"/>
</dbReference>
<dbReference type="GO" id="GO:0010830">
    <property type="term" value="P:regulation of myotube differentiation"/>
    <property type="evidence" value="ECO:0000314"/>
    <property type="project" value="UniProtKB"/>
</dbReference>
<dbReference type="GO" id="GO:0043484">
    <property type="term" value="P:regulation of RNA splicing"/>
    <property type="evidence" value="ECO:0007669"/>
    <property type="project" value="Ensembl"/>
</dbReference>
<dbReference type="GO" id="GO:0008380">
    <property type="term" value="P:RNA splicing"/>
    <property type="evidence" value="ECO:0007669"/>
    <property type="project" value="UniProtKB-KW"/>
</dbReference>
<dbReference type="CDD" id="cd12384">
    <property type="entry name" value="RRM_RBM24_RBM38_like"/>
    <property type="match status" value="1"/>
</dbReference>
<dbReference type="FunFam" id="3.30.70.330:FF:000524">
    <property type="entry name" value="RNA-binding motif protein 38"/>
    <property type="match status" value="1"/>
</dbReference>
<dbReference type="Gene3D" id="3.30.70.330">
    <property type="match status" value="1"/>
</dbReference>
<dbReference type="InterPro" id="IPR012677">
    <property type="entry name" value="Nucleotide-bd_a/b_plait_sf"/>
</dbReference>
<dbReference type="InterPro" id="IPR035979">
    <property type="entry name" value="RBD_domain_sf"/>
</dbReference>
<dbReference type="InterPro" id="IPR050886">
    <property type="entry name" value="RNA-binding_reg"/>
</dbReference>
<dbReference type="InterPro" id="IPR000504">
    <property type="entry name" value="RRM_dom"/>
</dbReference>
<dbReference type="PANTHER" id="PTHR48024">
    <property type="entry name" value="GEO13361P1-RELATED"/>
    <property type="match status" value="1"/>
</dbReference>
<dbReference type="PANTHER" id="PTHR48024:SF28">
    <property type="entry name" value="RNA-BINDING PROTEIN 38"/>
    <property type="match status" value="1"/>
</dbReference>
<dbReference type="Pfam" id="PF00076">
    <property type="entry name" value="RRM_1"/>
    <property type="match status" value="1"/>
</dbReference>
<dbReference type="SMART" id="SM00360">
    <property type="entry name" value="RRM"/>
    <property type="match status" value="1"/>
</dbReference>
<dbReference type="SUPFAM" id="SSF54928">
    <property type="entry name" value="RNA-binding domain, RBD"/>
    <property type="match status" value="1"/>
</dbReference>
<dbReference type="PROSITE" id="PS50102">
    <property type="entry name" value="RRM"/>
    <property type="match status" value="1"/>
</dbReference>
<comment type="function">
    <text evidence="1 4">RNA-binding protein that specifically bind the 3'-UTR of CDKN1A transcripts, leading to maintain the stability of CDKN1A transcripts, thereby acting as a mediator of the p53/TP53 family to regulate CDKN1A. CDKN1A is a cyclin-dependent kinase inhibitor transcriptionally regulated by the p53/TP53 family to induce cell cycle arrest. Has the ability to induce cell cycle arrest in G1 and maintain the stability of CDKN1A transcripts induced by p53/TP53. Also acts as a mRNA splicing factor. Specifically regulates the expression of FGFR2-IIIb, an epithelial cell-specific isoform of FGFR2 (By similarity). Plays a role in myogenic differentiation.</text>
</comment>
<comment type="subcellular location">
    <subcellularLocation>
        <location evidence="1">Cytoplasm</location>
        <location evidence="1">Cytosol</location>
    </subcellularLocation>
    <subcellularLocation>
        <location evidence="1">Nucleus</location>
    </subcellularLocation>
</comment>
<comment type="tissue specificity">
    <text evidence="4">Expressed in cardiac and skeletal muscle tissues.</text>
</comment>
<comment type="similarity">
    <text evidence="5">Belongs to the RBM38 family.</text>
</comment>
<comment type="caution">
    <text evidence="5">It is uncertain whether Met-1 or Met-22 is the initiator.</text>
</comment>
<accession>Q62176</accession>
<accession>Q5U418</accession>
<accession>Q922Z2</accession>
<evidence type="ECO:0000250" key="1"/>
<evidence type="ECO:0000255" key="2">
    <source>
        <dbReference type="PROSITE-ProRule" id="PRU00176"/>
    </source>
</evidence>
<evidence type="ECO:0000256" key="3">
    <source>
        <dbReference type="SAM" id="MobiDB-lite"/>
    </source>
</evidence>
<evidence type="ECO:0000269" key="4">
    <source>
    </source>
</evidence>
<evidence type="ECO:0000305" key="5"/>
<protein>
    <recommendedName>
        <fullName>RNA-binding protein 38</fullName>
    </recommendedName>
    <alternativeName>
        <fullName>RNA-binding motif protein 38</fullName>
    </alternativeName>
    <alternativeName>
        <fullName>RNA-binding region-containing protein 1</fullName>
    </alternativeName>
    <alternativeName>
        <fullName>ssDNA-binding protein SEB4</fullName>
    </alternativeName>
</protein>